<proteinExistence type="inferred from homology"/>
<name>ATPF_ACIAD</name>
<reference key="1">
    <citation type="journal article" date="2004" name="Nucleic Acids Res.">
        <title>Unique features revealed by the genome sequence of Acinetobacter sp. ADP1, a versatile and naturally transformation competent bacterium.</title>
        <authorList>
            <person name="Barbe V."/>
            <person name="Vallenet D."/>
            <person name="Fonknechten N."/>
            <person name="Kreimeyer A."/>
            <person name="Oztas S."/>
            <person name="Labarre L."/>
            <person name="Cruveiller S."/>
            <person name="Robert C."/>
            <person name="Duprat S."/>
            <person name="Wincker P."/>
            <person name="Ornston L.N."/>
            <person name="Weissenbach J."/>
            <person name="Marliere P."/>
            <person name="Cohen G.N."/>
            <person name="Medigue C."/>
        </authorList>
    </citation>
    <scope>NUCLEOTIDE SEQUENCE [LARGE SCALE GENOMIC DNA]</scope>
    <source>
        <strain>ATCC 33305 / BD413 / ADP1</strain>
    </source>
</reference>
<comment type="function">
    <text evidence="1">F(1)F(0) ATP synthase produces ATP from ADP in the presence of a proton or sodium gradient. F-type ATPases consist of two structural domains, F(1) containing the extramembraneous catalytic core and F(0) containing the membrane proton channel, linked together by a central stalk and a peripheral stalk. During catalysis, ATP synthesis in the catalytic domain of F(1) is coupled via a rotary mechanism of the central stalk subunits to proton translocation.</text>
</comment>
<comment type="function">
    <text evidence="1">Component of the F(0) channel, it forms part of the peripheral stalk, linking F(1) to F(0).</text>
</comment>
<comment type="subunit">
    <text evidence="1">F-type ATPases have 2 components, F(1) - the catalytic core - and F(0) - the membrane proton channel. F(1) has five subunits: alpha(3), beta(3), gamma(1), delta(1), epsilon(1). F(0) has three main subunits: a(1), b(2) and c(10-14). The alpha and beta chains form an alternating ring which encloses part of the gamma chain. F(1) is attached to F(0) by a central stalk formed by the gamma and epsilon chains, while a peripheral stalk is formed by the delta and b chains.</text>
</comment>
<comment type="subcellular location">
    <subcellularLocation>
        <location evidence="1">Cell inner membrane</location>
        <topology evidence="1">Single-pass membrane protein</topology>
    </subcellularLocation>
</comment>
<comment type="similarity">
    <text evidence="1">Belongs to the ATPase B chain family.</text>
</comment>
<sequence length="156" mass="17085">MNINLTLIGQAIAFAIFVAFCMKFVWPPLINAISERQRKIADGLNAAEKAKADLADAQAQVKQELDAAKAQAAQLIEQANRRAAQLIEEARTQATAEGERIRQQSKETVDQEINAAREELRQQVAALAVDGAEKILNQQVDQQAHAAMLEQLAAKL</sequence>
<evidence type="ECO:0000255" key="1">
    <source>
        <dbReference type="HAMAP-Rule" id="MF_01398"/>
    </source>
</evidence>
<organism>
    <name type="scientific">Acinetobacter baylyi (strain ATCC 33305 / BD413 / ADP1)</name>
    <dbReference type="NCBI Taxonomy" id="62977"/>
    <lineage>
        <taxon>Bacteria</taxon>
        <taxon>Pseudomonadati</taxon>
        <taxon>Pseudomonadota</taxon>
        <taxon>Gammaproteobacteria</taxon>
        <taxon>Moraxellales</taxon>
        <taxon>Moraxellaceae</taxon>
        <taxon>Acinetobacter</taxon>
    </lineage>
</organism>
<gene>
    <name evidence="1" type="primary">atpF</name>
    <name type="ordered locus">ACIAD0183</name>
</gene>
<dbReference type="EMBL" id="CR543861">
    <property type="protein sequence ID" value="CAG67153.1"/>
    <property type="molecule type" value="Genomic_DNA"/>
</dbReference>
<dbReference type="RefSeq" id="WP_004930551.1">
    <property type="nucleotide sequence ID" value="NC_005966.1"/>
</dbReference>
<dbReference type="SMR" id="Q6FFK4"/>
<dbReference type="STRING" id="202950.GCA_001485005_01913"/>
<dbReference type="GeneID" id="45232698"/>
<dbReference type="KEGG" id="aci:ACIAD0183"/>
<dbReference type="eggNOG" id="COG0711">
    <property type="taxonomic scope" value="Bacteria"/>
</dbReference>
<dbReference type="HOGENOM" id="CLU_079215_4_5_6"/>
<dbReference type="OrthoDB" id="9788020at2"/>
<dbReference type="BioCyc" id="ASP62977:ACIAD_RS00845-MONOMER"/>
<dbReference type="Proteomes" id="UP000000430">
    <property type="component" value="Chromosome"/>
</dbReference>
<dbReference type="GO" id="GO:0005886">
    <property type="term" value="C:plasma membrane"/>
    <property type="evidence" value="ECO:0007669"/>
    <property type="project" value="UniProtKB-SubCell"/>
</dbReference>
<dbReference type="GO" id="GO:0045259">
    <property type="term" value="C:proton-transporting ATP synthase complex"/>
    <property type="evidence" value="ECO:0007669"/>
    <property type="project" value="UniProtKB-KW"/>
</dbReference>
<dbReference type="GO" id="GO:0046933">
    <property type="term" value="F:proton-transporting ATP synthase activity, rotational mechanism"/>
    <property type="evidence" value="ECO:0007669"/>
    <property type="project" value="UniProtKB-UniRule"/>
</dbReference>
<dbReference type="GO" id="GO:0046961">
    <property type="term" value="F:proton-transporting ATPase activity, rotational mechanism"/>
    <property type="evidence" value="ECO:0007669"/>
    <property type="project" value="TreeGrafter"/>
</dbReference>
<dbReference type="CDD" id="cd06503">
    <property type="entry name" value="ATP-synt_Fo_b"/>
    <property type="match status" value="1"/>
</dbReference>
<dbReference type="Gene3D" id="6.10.250.1580">
    <property type="match status" value="1"/>
</dbReference>
<dbReference type="HAMAP" id="MF_01398">
    <property type="entry name" value="ATP_synth_b_bprime"/>
    <property type="match status" value="1"/>
</dbReference>
<dbReference type="InterPro" id="IPR028987">
    <property type="entry name" value="ATP_synth_B-like_membr_sf"/>
</dbReference>
<dbReference type="InterPro" id="IPR002146">
    <property type="entry name" value="ATP_synth_b/b'su_bac/chlpt"/>
</dbReference>
<dbReference type="InterPro" id="IPR005864">
    <property type="entry name" value="ATP_synth_F0_bsu_bac"/>
</dbReference>
<dbReference type="InterPro" id="IPR050059">
    <property type="entry name" value="ATP_synthase_B_chain"/>
</dbReference>
<dbReference type="NCBIfam" id="TIGR01144">
    <property type="entry name" value="ATP_synt_b"/>
    <property type="match status" value="1"/>
</dbReference>
<dbReference type="NCBIfam" id="NF004411">
    <property type="entry name" value="PRK05759.1-2"/>
    <property type="match status" value="1"/>
</dbReference>
<dbReference type="PANTHER" id="PTHR33445:SF1">
    <property type="entry name" value="ATP SYNTHASE SUBUNIT B"/>
    <property type="match status" value="1"/>
</dbReference>
<dbReference type="PANTHER" id="PTHR33445">
    <property type="entry name" value="ATP SYNTHASE SUBUNIT B', CHLOROPLASTIC"/>
    <property type="match status" value="1"/>
</dbReference>
<dbReference type="Pfam" id="PF00430">
    <property type="entry name" value="ATP-synt_B"/>
    <property type="match status" value="1"/>
</dbReference>
<dbReference type="SUPFAM" id="SSF81573">
    <property type="entry name" value="F1F0 ATP synthase subunit B, membrane domain"/>
    <property type="match status" value="1"/>
</dbReference>
<feature type="chain" id="PRO_0000368294" description="ATP synthase subunit b">
    <location>
        <begin position="1"/>
        <end position="156"/>
    </location>
</feature>
<feature type="transmembrane region" description="Helical" evidence="1">
    <location>
        <begin position="5"/>
        <end position="25"/>
    </location>
</feature>
<accession>Q6FFK4</accession>
<protein>
    <recommendedName>
        <fullName evidence="1">ATP synthase subunit b</fullName>
    </recommendedName>
    <alternativeName>
        <fullName evidence="1">ATP synthase F(0) sector subunit b</fullName>
    </alternativeName>
    <alternativeName>
        <fullName evidence="1">ATPase subunit I</fullName>
    </alternativeName>
    <alternativeName>
        <fullName evidence="1">F-type ATPase subunit b</fullName>
        <shortName evidence="1">F-ATPase subunit b</shortName>
    </alternativeName>
</protein>
<keyword id="KW-0066">ATP synthesis</keyword>
<keyword id="KW-0997">Cell inner membrane</keyword>
<keyword id="KW-1003">Cell membrane</keyword>
<keyword id="KW-0138">CF(0)</keyword>
<keyword id="KW-0375">Hydrogen ion transport</keyword>
<keyword id="KW-0406">Ion transport</keyword>
<keyword id="KW-0472">Membrane</keyword>
<keyword id="KW-0812">Transmembrane</keyword>
<keyword id="KW-1133">Transmembrane helix</keyword>
<keyword id="KW-0813">Transport</keyword>